<name>FIS_SERMA</name>
<dbReference type="EMBL" id="AF040378">
    <property type="protein sequence ID" value="AAC77881.1"/>
    <property type="molecule type" value="Genomic_DNA"/>
</dbReference>
<dbReference type="RefSeq" id="WP_000462905.1">
    <property type="nucleotide sequence ID" value="NZ_WVHX01000012.1"/>
</dbReference>
<dbReference type="SMR" id="P0A6R9"/>
<dbReference type="STRING" id="273526.SMDB11_3674"/>
<dbReference type="GeneID" id="98390389"/>
<dbReference type="OrthoDB" id="9802388at2"/>
<dbReference type="GO" id="GO:0003700">
    <property type="term" value="F:DNA-binding transcription factor activity"/>
    <property type="evidence" value="ECO:0007669"/>
    <property type="project" value="UniProtKB-UniRule"/>
</dbReference>
<dbReference type="GO" id="GO:0043565">
    <property type="term" value="F:sequence-specific DNA binding"/>
    <property type="evidence" value="ECO:0007669"/>
    <property type="project" value="InterPro"/>
</dbReference>
<dbReference type="FunFam" id="1.10.10.60:FF:000006">
    <property type="entry name" value="DNA-binding protein Fis"/>
    <property type="match status" value="1"/>
</dbReference>
<dbReference type="Gene3D" id="1.10.10.60">
    <property type="entry name" value="Homeodomain-like"/>
    <property type="match status" value="1"/>
</dbReference>
<dbReference type="HAMAP" id="MF_00166">
    <property type="entry name" value="DNA_binding_Fis"/>
    <property type="match status" value="1"/>
</dbReference>
<dbReference type="InterPro" id="IPR005412">
    <property type="entry name" value="Fis_DNA-bd"/>
</dbReference>
<dbReference type="InterPro" id="IPR009057">
    <property type="entry name" value="Homeodomain-like_sf"/>
</dbReference>
<dbReference type="InterPro" id="IPR002197">
    <property type="entry name" value="HTH_Fis"/>
</dbReference>
<dbReference type="InterPro" id="IPR050207">
    <property type="entry name" value="Trans_regulatory_Fis"/>
</dbReference>
<dbReference type="NCBIfam" id="NF001659">
    <property type="entry name" value="PRK00430.1"/>
    <property type="match status" value="1"/>
</dbReference>
<dbReference type="PANTHER" id="PTHR47918">
    <property type="entry name" value="DNA-BINDING PROTEIN FIS"/>
    <property type="match status" value="1"/>
</dbReference>
<dbReference type="PANTHER" id="PTHR47918:SF1">
    <property type="entry name" value="DNA-BINDING PROTEIN FIS"/>
    <property type="match status" value="1"/>
</dbReference>
<dbReference type="Pfam" id="PF02954">
    <property type="entry name" value="HTH_8"/>
    <property type="match status" value="1"/>
</dbReference>
<dbReference type="PIRSF" id="PIRSF002097">
    <property type="entry name" value="DNA-binding_Fis"/>
    <property type="match status" value="1"/>
</dbReference>
<dbReference type="PRINTS" id="PR01591">
    <property type="entry name" value="DNABINDNGFIS"/>
</dbReference>
<dbReference type="PRINTS" id="PR01590">
    <property type="entry name" value="HTHFIS"/>
</dbReference>
<dbReference type="SUPFAM" id="SSF46689">
    <property type="entry name" value="Homeodomain-like"/>
    <property type="match status" value="1"/>
</dbReference>
<organism>
    <name type="scientific">Serratia marcescens</name>
    <dbReference type="NCBI Taxonomy" id="615"/>
    <lineage>
        <taxon>Bacteria</taxon>
        <taxon>Pseudomonadati</taxon>
        <taxon>Pseudomonadota</taxon>
        <taxon>Gammaproteobacteria</taxon>
        <taxon>Enterobacterales</taxon>
        <taxon>Yersiniaceae</taxon>
        <taxon>Serratia</taxon>
    </lineage>
</organism>
<evidence type="ECO:0000255" key="1">
    <source>
        <dbReference type="HAMAP-Rule" id="MF_00166"/>
    </source>
</evidence>
<protein>
    <recommendedName>
        <fullName evidence="1">DNA-binding protein Fis</fullName>
    </recommendedName>
</protein>
<sequence>MFEQRVNSDVLTVSTVNSQDQVTQKPLRDSVKQALKNYFAQLNGQDVNDLYELVLAEVEQPLLDMVMQYTRGNQTRAALMMGINRGTLRKKLKKYGMN</sequence>
<reference key="1">
    <citation type="journal article" date="1998" name="J. Bacteriol.">
        <title>Identification and characterization of the fis operon in enteric bacteria.</title>
        <authorList>
            <person name="Beach M.B."/>
            <person name="Osuna R."/>
        </authorList>
    </citation>
    <scope>NUCLEOTIDE SEQUENCE [GENOMIC DNA]</scope>
</reference>
<proteinExistence type="inferred from homology"/>
<gene>
    <name evidence="1" type="primary">fis</name>
</gene>
<accession>P0A6R9</accession>
<accession>P11028</accession>
<accession>P37404</accession>
<feature type="chain" id="PRO_0000203895" description="DNA-binding protein Fis">
    <location>
        <begin position="1"/>
        <end position="98"/>
    </location>
</feature>
<feature type="DNA-binding region" description="H-T-H motif" evidence="1">
    <location>
        <begin position="74"/>
        <end position="93"/>
    </location>
</feature>
<comment type="function">
    <text evidence="1">Activates ribosomal RNA transcription. Plays a direct role in upstream activation of rRNA promoters.</text>
</comment>
<comment type="subunit">
    <text evidence="1">Homodimer.</text>
</comment>
<comment type="similarity">
    <text evidence="1">Belongs to the transcriptional regulatory Fis family.</text>
</comment>
<keyword id="KW-0010">Activator</keyword>
<keyword id="KW-0238">DNA-binding</keyword>
<keyword id="KW-0804">Transcription</keyword>
<keyword id="KW-0805">Transcription regulation</keyword>